<keyword id="KW-1185">Reference proteome</keyword>
<dbReference type="EMBL" id="BA000043">
    <property type="protein sequence ID" value="BAD76066.1"/>
    <property type="molecule type" value="Genomic_DNA"/>
</dbReference>
<dbReference type="RefSeq" id="WP_011231273.1">
    <property type="nucleotide sequence ID" value="NC_006510.1"/>
</dbReference>
<dbReference type="SMR" id="Q5KZ20"/>
<dbReference type="STRING" id="235909.GK1781"/>
<dbReference type="KEGG" id="gka:GK1781"/>
<dbReference type="eggNOG" id="ENOG502ZBVN">
    <property type="taxonomic scope" value="Bacteria"/>
</dbReference>
<dbReference type="HOGENOM" id="CLU_132521_0_0_9"/>
<dbReference type="Proteomes" id="UP000001172">
    <property type="component" value="Chromosome"/>
</dbReference>
<dbReference type="GO" id="GO:0045454">
    <property type="term" value="P:cell redox homeostasis"/>
    <property type="evidence" value="ECO:0000250"/>
    <property type="project" value="UniProtKB"/>
</dbReference>
<dbReference type="Gene3D" id="6.10.250.2150">
    <property type="match status" value="1"/>
</dbReference>
<dbReference type="Gene3D" id="3.40.30.10">
    <property type="entry name" value="Glutaredoxin"/>
    <property type="match status" value="1"/>
</dbReference>
<dbReference type="InterPro" id="IPR009474">
    <property type="entry name" value="BrxB/BrxA"/>
</dbReference>
<dbReference type="NCBIfam" id="TIGR04191">
    <property type="entry name" value="YphP_YqiW"/>
    <property type="match status" value="1"/>
</dbReference>
<dbReference type="PANTHER" id="PTHR40052:SF2">
    <property type="entry name" value="BACILLIREDOXIN BRXA"/>
    <property type="match status" value="1"/>
</dbReference>
<dbReference type="PANTHER" id="PTHR40052">
    <property type="entry name" value="UPF0403 PROTEIN YQIW-RELATED"/>
    <property type="match status" value="1"/>
</dbReference>
<dbReference type="Pfam" id="PF06491">
    <property type="entry name" value="Disulph_isomer"/>
    <property type="match status" value="1"/>
</dbReference>
<comment type="similarity">
    <text evidence="1">Belongs to the bacilliredoxin family.</text>
</comment>
<evidence type="ECO:0000305" key="1"/>
<organism>
    <name type="scientific">Geobacillus kaustophilus (strain HTA426)</name>
    <dbReference type="NCBI Taxonomy" id="235909"/>
    <lineage>
        <taxon>Bacteria</taxon>
        <taxon>Bacillati</taxon>
        <taxon>Bacillota</taxon>
        <taxon>Bacilli</taxon>
        <taxon>Bacillales</taxon>
        <taxon>Anoxybacillaceae</taxon>
        <taxon>Geobacillus</taxon>
        <taxon>Geobacillus thermoleovorans group</taxon>
    </lineage>
</organism>
<sequence>MSMAYEDYMRQLVQPMRDELVRAGFRELRTSEEVEQFMKQVEGTTFVFVNSVCGCAAGLARPAATQAVLRSEKKPDHLVTVFAGQDKEATAKMREYFVGYPPSSPSMALLKGKEVVHFIPREDIEFHSMEDVMENILAAFDKYCG</sequence>
<feature type="chain" id="PRO_0000271990" description="Bacilliredoxin GK1781">
    <location>
        <begin position="1"/>
        <end position="145"/>
    </location>
</feature>
<proteinExistence type="inferred from homology"/>
<reference key="1">
    <citation type="journal article" date="2004" name="Nucleic Acids Res.">
        <title>Thermoadaptation trait revealed by the genome sequence of thermophilic Geobacillus kaustophilus.</title>
        <authorList>
            <person name="Takami H."/>
            <person name="Takaki Y."/>
            <person name="Chee G.-J."/>
            <person name="Nishi S."/>
            <person name="Shimamura S."/>
            <person name="Suzuki H."/>
            <person name="Matsui S."/>
            <person name="Uchiyama I."/>
        </authorList>
    </citation>
    <scope>NUCLEOTIDE SEQUENCE [LARGE SCALE GENOMIC DNA]</scope>
    <source>
        <strain>HTA426</strain>
    </source>
</reference>
<protein>
    <recommendedName>
        <fullName evidence="1">Bacilliredoxin GK1781</fullName>
    </recommendedName>
</protein>
<gene>
    <name type="ordered locus">GK1781</name>
</gene>
<name>Y1781_GEOKA</name>
<accession>Q5KZ20</accession>